<comment type="function">
    <text evidence="1">Has both toxic and EGF activity. Its EGF activity consists of rounding cells (morphological change) and inducing tyrosine phosphorylation of the EGFR in A431 cells, but with a lower potency that human EGF.</text>
</comment>
<comment type="subcellular location">
    <subcellularLocation>
        <location evidence="6">Secreted</location>
    </subcellularLocation>
    <subcellularLocation>
        <location evidence="6">Nematocyst</location>
    </subcellularLocation>
</comment>
<comment type="similarity">
    <text evidence="6">Belongs to the EGF domain peptide family.</text>
</comment>
<comment type="caution">
    <text evidence="6">Opinions are divided on whether Anemonia viridis (Forsskal, 1775) and Anemonia sulcata (Pennant, 1777) are separate species.</text>
</comment>
<protein>
    <recommendedName>
        <fullName evidence="5">U-actitoxin-Avd12a</fullName>
        <shortName evidence="5">U-AITX-Avd12a</shortName>
    </recommendedName>
    <alternativeName>
        <fullName evidence="4">Gigantoxin-4</fullName>
        <shortName evidence="4">Gigt 4</shortName>
    </alternativeName>
</protein>
<accession>P0DMY9</accession>
<keyword id="KW-1015">Disulfide bond</keyword>
<keyword id="KW-0245">EGF-like domain</keyword>
<keyword id="KW-0166">Nematocyst</keyword>
<keyword id="KW-0964">Secreted</keyword>
<keyword id="KW-0732">Signal</keyword>
<organism>
    <name type="scientific">Anemonia viridis</name>
    <name type="common">Snakelocks anemone</name>
    <dbReference type="NCBI Taxonomy" id="51769"/>
    <lineage>
        <taxon>Eukaryota</taxon>
        <taxon>Metazoa</taxon>
        <taxon>Cnidaria</taxon>
        <taxon>Anthozoa</taxon>
        <taxon>Hexacorallia</taxon>
        <taxon>Actiniaria</taxon>
        <taxon>Actiniidae</taxon>
        <taxon>Anemonia</taxon>
    </lineage>
</organism>
<reference key="1">
    <citation type="journal article" date="2009" name="BMC Genomics">
        <title>Comprehensive EST analysis of the symbiotic sea anemone, Anemonia viridis.</title>
        <authorList>
            <person name="Sabourault C."/>
            <person name="Ganot P."/>
            <person name="Deleury E."/>
            <person name="Allemand D."/>
            <person name="Furla P."/>
        </authorList>
    </citation>
    <scope>NUCLEOTIDE SEQUENCE [MRNA]</scope>
</reference>
<reference key="2">
    <citation type="journal article" date="2011" name="BMC Genomics">
        <title>The mining of toxin-like polypeptides from EST database by single residue distribution analysis.</title>
        <authorList>
            <person name="Kozlov S."/>
            <person name="Grishin E."/>
        </authorList>
    </citation>
    <scope>NOMENCLATURE</scope>
</reference>
<reference key="3">
    <citation type="journal article" date="2012" name="Toxicon">
        <title>Development of a rational nomenclature for naming peptide and protein toxins from sea anemones.</title>
        <authorList>
            <person name="Oliveira J.S."/>
            <person name="Fuentes-Silva D."/>
            <person name="King G.F."/>
        </authorList>
    </citation>
    <scope>NOMENCLATURE</scope>
</reference>
<name>GIG4_ANEVI</name>
<evidence type="ECO:0000250" key="1">
    <source>
        <dbReference type="UniProtKB" id="Q76CA1"/>
    </source>
</evidence>
<evidence type="ECO:0000255" key="2"/>
<evidence type="ECO:0000255" key="3">
    <source>
        <dbReference type="PROSITE-ProRule" id="PRU00076"/>
    </source>
</evidence>
<evidence type="ECO:0000303" key="4">
    <source>
    </source>
</evidence>
<evidence type="ECO:0000303" key="5">
    <source>
    </source>
</evidence>
<evidence type="ECO:0000305" key="6"/>
<evidence type="ECO:0000305" key="7">
    <source>
    </source>
</evidence>
<feature type="signal peptide" evidence="2">
    <location>
        <begin position="1"/>
        <end position="23"/>
    </location>
</feature>
<feature type="propeptide" id="PRO_0000433674" evidence="7">
    <location>
        <begin position="24"/>
        <end position="29"/>
    </location>
</feature>
<feature type="chain" id="PRO_0000433675" description="U-actitoxin-Avd12a" evidence="1">
    <location>
        <begin position="30"/>
        <end position="77"/>
    </location>
</feature>
<feature type="domain" description="EGF-like" evidence="3">
    <location>
        <begin position="31"/>
        <end position="73"/>
    </location>
</feature>
<feature type="disulfide bond" evidence="3">
    <location>
        <begin position="35"/>
        <end position="50"/>
    </location>
</feature>
<feature type="disulfide bond" evidence="3">
    <location>
        <begin position="44"/>
        <end position="61"/>
    </location>
</feature>
<feature type="disulfide bond" evidence="3">
    <location>
        <begin position="63"/>
        <end position="72"/>
    </location>
</feature>
<sequence length="77" mass="8653">MALFRMLFLCAVLVLLTSKEGMSYEEPENDEGVACTGQYAESFCLNGGTCRYIQSIGEYYCICNGDYTGHRCEKKQV</sequence>
<dbReference type="EMBL" id="FK735889">
    <property type="status" value="NOT_ANNOTATED_CDS"/>
    <property type="molecule type" value="mRNA"/>
</dbReference>
<dbReference type="SMR" id="P0DMY9"/>
<dbReference type="GO" id="GO:0005576">
    <property type="term" value="C:extracellular region"/>
    <property type="evidence" value="ECO:0007669"/>
    <property type="project" value="UniProtKB-SubCell"/>
</dbReference>
<dbReference type="GO" id="GO:0042151">
    <property type="term" value="C:nematocyst"/>
    <property type="evidence" value="ECO:0007669"/>
    <property type="project" value="UniProtKB-SubCell"/>
</dbReference>
<dbReference type="CDD" id="cd00054">
    <property type="entry name" value="EGF_CA"/>
    <property type="match status" value="1"/>
</dbReference>
<dbReference type="Gene3D" id="2.10.25.10">
    <property type="entry name" value="Laminin"/>
    <property type="match status" value="1"/>
</dbReference>
<dbReference type="InterPro" id="IPR000742">
    <property type="entry name" value="EGF-like_dom"/>
</dbReference>
<dbReference type="Pfam" id="PF00008">
    <property type="entry name" value="EGF"/>
    <property type="match status" value="1"/>
</dbReference>
<dbReference type="SUPFAM" id="SSF57196">
    <property type="entry name" value="EGF/Laminin"/>
    <property type="match status" value="1"/>
</dbReference>
<dbReference type="PROSITE" id="PS00022">
    <property type="entry name" value="EGF_1"/>
    <property type="match status" value="1"/>
</dbReference>
<dbReference type="PROSITE" id="PS50026">
    <property type="entry name" value="EGF_3"/>
    <property type="match status" value="1"/>
</dbReference>
<proteinExistence type="inferred from homology"/>